<organism>
    <name type="scientific">Pseudomonas putida (strain ATCC 47054 / DSM 6125 / CFBP 8728 / NCIMB 11950 / KT2440)</name>
    <dbReference type="NCBI Taxonomy" id="160488"/>
    <lineage>
        <taxon>Bacteria</taxon>
        <taxon>Pseudomonadati</taxon>
        <taxon>Pseudomonadota</taxon>
        <taxon>Gammaproteobacteria</taxon>
        <taxon>Pseudomonadales</taxon>
        <taxon>Pseudomonadaceae</taxon>
        <taxon>Pseudomonas</taxon>
    </lineage>
</organism>
<protein>
    <recommendedName>
        <fullName evidence="1">Protein translocase subunit SecA</fullName>
        <ecNumber evidence="1">7.4.2.8</ecNumber>
    </recommendedName>
</protein>
<reference key="1">
    <citation type="journal article" date="2002" name="Environ. Microbiol.">
        <title>Complete genome sequence and comparative analysis of the metabolically versatile Pseudomonas putida KT2440.</title>
        <authorList>
            <person name="Nelson K.E."/>
            <person name="Weinel C."/>
            <person name="Paulsen I.T."/>
            <person name="Dodson R.J."/>
            <person name="Hilbert H."/>
            <person name="Martins dos Santos V.A.P."/>
            <person name="Fouts D.E."/>
            <person name="Gill S.R."/>
            <person name="Pop M."/>
            <person name="Holmes M."/>
            <person name="Brinkac L.M."/>
            <person name="Beanan M.J."/>
            <person name="DeBoy R.T."/>
            <person name="Daugherty S.C."/>
            <person name="Kolonay J.F."/>
            <person name="Madupu R."/>
            <person name="Nelson W.C."/>
            <person name="White O."/>
            <person name="Peterson J.D."/>
            <person name="Khouri H.M."/>
            <person name="Hance I."/>
            <person name="Chris Lee P."/>
            <person name="Holtzapple E.K."/>
            <person name="Scanlan D."/>
            <person name="Tran K."/>
            <person name="Moazzez A."/>
            <person name="Utterback T.R."/>
            <person name="Rizzo M."/>
            <person name="Lee K."/>
            <person name="Kosack D."/>
            <person name="Moestl D."/>
            <person name="Wedler H."/>
            <person name="Lauber J."/>
            <person name="Stjepandic D."/>
            <person name="Hoheisel J."/>
            <person name="Straetz M."/>
            <person name="Heim S."/>
            <person name="Kiewitz C."/>
            <person name="Eisen J.A."/>
            <person name="Timmis K.N."/>
            <person name="Duesterhoeft A."/>
            <person name="Tuemmler B."/>
            <person name="Fraser C.M."/>
        </authorList>
    </citation>
    <scope>NUCLEOTIDE SEQUENCE [LARGE SCALE GENOMIC DNA]</scope>
    <source>
        <strain>ATCC 47054 / DSM 6125 / CFBP 8728 / NCIMB 11950 / KT2440</strain>
    </source>
</reference>
<evidence type="ECO:0000255" key="1">
    <source>
        <dbReference type="HAMAP-Rule" id="MF_01382"/>
    </source>
</evidence>
<evidence type="ECO:0000256" key="2">
    <source>
        <dbReference type="SAM" id="MobiDB-lite"/>
    </source>
</evidence>
<evidence type="ECO:0000305" key="3"/>
<accession>Q88N69</accession>
<gene>
    <name evidence="1" type="primary">secA</name>
    <name type="ordered locus">PP_1345</name>
</gene>
<sequence length="911" mass="102868">MFAPLLKKLFGSKNEREVKRMLKTVSIVNAFEEKMVALSDEQLRGKTAEFKERLAKGETLDQLLPEAFAVAREAGKRVMGMRHFDVQLIGGMTLHEGMIAEMRTGEGKTLVGTLAVYLNALSGKGVHVVTVNDYLARRDANWMRPLYEFLGLSVGIVSAFQPPEEKRAAYAADITYGTNNEFGFDYLRDNMAFSQDEKFQRELNFAVIDEVDSILIDEARTPLIISGQAEDSSKLYIEINRLIPRLTQHIEEVEGQVTQEGHFTIDEKSRQVELNEAGHQFIEEMLAQAGLLAEGESLYSAHNLGLLTHVYAGLRAHKLFHRNVEYIVQDGQVLLIDEHTGRTMPGRRLSEGLHQAIEAKENLNIQAESQTLASTTFQNYFRLYTKLSGMTGTADTEAFEFQSIYGLNVMVIPPNKPLARKDYNDLVYLTADEKYAAIIADIKESMKLGRPVLVGTATIETSEHMSNLLKKEGIDHKVLNAKYHEKEAEIIAQAGAPGALTIATNMAGRGTDILLGGNWEAEVAALENPTAEQIAQIKADWQKRHQQVIETGGLHVIASERHESRRIDNQLRGRSGRQGDPGSSRFYLSLEDSLMRIFASDRVKNFMKALGMQSGEAIEHRMVTNAIEKAQRKVEGRNFDIRKQLLEYDDVANEQRKVIYHMRNSLLAAENIGDTIVEFRKEVLDATISQHIPPQSLPEQWDVAGLEASLASDFAIKLPIRQWLDEDDHLYEETLREKLLSEITTAYTEKEDQAGLEALRTFEKQILLRVLDDLWKDHLSTMDHLRHGIHLRGYAQKNPKQEYKRESFSLFQELLESIKRDTIRVLSHVQVRREDPAEEEARLRREAEELASRMQFQHAAAPGLGSEQLSEEGAEVAVASAPVRNDQKLGRNEPCWCGSGKKFKHCHGQIE</sequence>
<comment type="function">
    <text evidence="1">Part of the Sec protein translocase complex. Interacts with the SecYEG preprotein conducting channel. Has a central role in coupling the hydrolysis of ATP to the transfer of proteins into and across the cell membrane, serving both as a receptor for the preprotein-SecB complex and as an ATP-driven molecular motor driving the stepwise translocation of polypeptide chains across the membrane.</text>
</comment>
<comment type="catalytic activity">
    <reaction evidence="1">
        <text>ATP + H2O + cellular proteinSide 1 = ADP + phosphate + cellular proteinSide 2.</text>
        <dbReference type="EC" id="7.4.2.8"/>
    </reaction>
</comment>
<comment type="cofactor">
    <cofactor evidence="1">
        <name>Zn(2+)</name>
        <dbReference type="ChEBI" id="CHEBI:29105"/>
    </cofactor>
    <text evidence="1">May bind 1 zinc ion per subunit.</text>
</comment>
<comment type="subunit">
    <text evidence="1">Monomer and homodimer. Part of the essential Sec protein translocation apparatus which comprises SecA, SecYEG and auxiliary proteins SecDF-YajC and YidC.</text>
</comment>
<comment type="subcellular location">
    <subcellularLocation>
        <location evidence="1">Cell inner membrane</location>
        <topology evidence="1">Peripheral membrane protein</topology>
        <orientation evidence="1">Cytoplasmic side</orientation>
    </subcellularLocation>
    <subcellularLocation>
        <location evidence="1">Cytoplasm</location>
    </subcellularLocation>
    <text evidence="1">Distribution is 50-50.</text>
</comment>
<comment type="similarity">
    <text evidence="1">Belongs to the SecA family.</text>
</comment>
<comment type="sequence caution" evidence="3">
    <conflict type="erroneous initiation">
        <sequence resource="EMBL-CDS" id="AAN66968"/>
    </conflict>
    <text>Extended N-terminus.</text>
</comment>
<keyword id="KW-0067">ATP-binding</keyword>
<keyword id="KW-0997">Cell inner membrane</keyword>
<keyword id="KW-1003">Cell membrane</keyword>
<keyword id="KW-0963">Cytoplasm</keyword>
<keyword id="KW-0472">Membrane</keyword>
<keyword id="KW-0479">Metal-binding</keyword>
<keyword id="KW-0547">Nucleotide-binding</keyword>
<keyword id="KW-0653">Protein transport</keyword>
<keyword id="KW-1185">Reference proteome</keyword>
<keyword id="KW-1278">Translocase</keyword>
<keyword id="KW-0811">Translocation</keyword>
<keyword id="KW-0813">Transport</keyword>
<keyword id="KW-0862">Zinc</keyword>
<proteinExistence type="inferred from homology"/>
<dbReference type="EC" id="7.4.2.8" evidence="1"/>
<dbReference type="EMBL" id="AE015451">
    <property type="protein sequence ID" value="AAN66968.1"/>
    <property type="status" value="ALT_INIT"/>
    <property type="molecule type" value="Genomic_DNA"/>
</dbReference>
<dbReference type="RefSeq" id="NP_743504.3">
    <property type="nucleotide sequence ID" value="NC_002947.4"/>
</dbReference>
<dbReference type="RefSeq" id="WP_010952460.1">
    <property type="nucleotide sequence ID" value="NZ_CP169744.1"/>
</dbReference>
<dbReference type="SMR" id="Q88N69"/>
<dbReference type="STRING" id="160488.PP_1345"/>
<dbReference type="PaxDb" id="160488-PP_1345"/>
<dbReference type="GeneID" id="83682221"/>
<dbReference type="KEGG" id="ppu:PP_1345"/>
<dbReference type="PATRIC" id="fig|160488.4.peg.1424"/>
<dbReference type="eggNOG" id="COG0653">
    <property type="taxonomic scope" value="Bacteria"/>
</dbReference>
<dbReference type="HOGENOM" id="CLU_005314_3_0_6"/>
<dbReference type="OrthoDB" id="9805579at2"/>
<dbReference type="Proteomes" id="UP000000556">
    <property type="component" value="Chromosome"/>
</dbReference>
<dbReference type="GO" id="GO:0031522">
    <property type="term" value="C:cell envelope Sec protein transport complex"/>
    <property type="evidence" value="ECO:0007669"/>
    <property type="project" value="TreeGrafter"/>
</dbReference>
<dbReference type="GO" id="GO:0005829">
    <property type="term" value="C:cytosol"/>
    <property type="evidence" value="ECO:0007669"/>
    <property type="project" value="TreeGrafter"/>
</dbReference>
<dbReference type="GO" id="GO:0005886">
    <property type="term" value="C:plasma membrane"/>
    <property type="evidence" value="ECO:0007669"/>
    <property type="project" value="UniProtKB-SubCell"/>
</dbReference>
<dbReference type="GO" id="GO:0005524">
    <property type="term" value="F:ATP binding"/>
    <property type="evidence" value="ECO:0007669"/>
    <property type="project" value="UniProtKB-UniRule"/>
</dbReference>
<dbReference type="GO" id="GO:0046872">
    <property type="term" value="F:metal ion binding"/>
    <property type="evidence" value="ECO:0007669"/>
    <property type="project" value="UniProtKB-KW"/>
</dbReference>
<dbReference type="GO" id="GO:0008564">
    <property type="term" value="F:protein-exporting ATPase activity"/>
    <property type="evidence" value="ECO:0007669"/>
    <property type="project" value="UniProtKB-EC"/>
</dbReference>
<dbReference type="GO" id="GO:0065002">
    <property type="term" value="P:intracellular protein transmembrane transport"/>
    <property type="evidence" value="ECO:0007669"/>
    <property type="project" value="UniProtKB-UniRule"/>
</dbReference>
<dbReference type="GO" id="GO:0017038">
    <property type="term" value="P:protein import"/>
    <property type="evidence" value="ECO:0007669"/>
    <property type="project" value="InterPro"/>
</dbReference>
<dbReference type="GO" id="GO:0006605">
    <property type="term" value="P:protein targeting"/>
    <property type="evidence" value="ECO:0007669"/>
    <property type="project" value="UniProtKB-UniRule"/>
</dbReference>
<dbReference type="GO" id="GO:0043952">
    <property type="term" value="P:protein transport by the Sec complex"/>
    <property type="evidence" value="ECO:0007669"/>
    <property type="project" value="TreeGrafter"/>
</dbReference>
<dbReference type="CDD" id="cd17928">
    <property type="entry name" value="DEXDc_SecA"/>
    <property type="match status" value="1"/>
</dbReference>
<dbReference type="CDD" id="cd18803">
    <property type="entry name" value="SF2_C_secA"/>
    <property type="match status" value="1"/>
</dbReference>
<dbReference type="FunFam" id="3.40.50.300:FF:000081">
    <property type="entry name" value="Preprotein translocase subunit SecA"/>
    <property type="match status" value="1"/>
</dbReference>
<dbReference type="FunFam" id="3.40.50.300:FF:000113">
    <property type="entry name" value="Preprotein translocase subunit SecA"/>
    <property type="match status" value="1"/>
</dbReference>
<dbReference type="FunFam" id="3.90.1440.10:FF:000001">
    <property type="entry name" value="Preprotein translocase subunit SecA"/>
    <property type="match status" value="1"/>
</dbReference>
<dbReference type="FunFam" id="1.10.3060.10:FF:000003">
    <property type="entry name" value="Protein translocase subunit SecA"/>
    <property type="match status" value="1"/>
</dbReference>
<dbReference type="Gene3D" id="1.10.3060.10">
    <property type="entry name" value="Helical scaffold and wing domains of SecA"/>
    <property type="match status" value="1"/>
</dbReference>
<dbReference type="Gene3D" id="3.40.50.300">
    <property type="entry name" value="P-loop containing nucleotide triphosphate hydrolases"/>
    <property type="match status" value="2"/>
</dbReference>
<dbReference type="Gene3D" id="3.90.1440.10">
    <property type="entry name" value="SecA, preprotein cross-linking domain"/>
    <property type="match status" value="1"/>
</dbReference>
<dbReference type="HAMAP" id="MF_01382">
    <property type="entry name" value="SecA"/>
    <property type="match status" value="1"/>
</dbReference>
<dbReference type="InterPro" id="IPR014001">
    <property type="entry name" value="Helicase_ATP-bd"/>
</dbReference>
<dbReference type="InterPro" id="IPR001650">
    <property type="entry name" value="Helicase_C-like"/>
</dbReference>
<dbReference type="InterPro" id="IPR027417">
    <property type="entry name" value="P-loop_NTPase"/>
</dbReference>
<dbReference type="InterPro" id="IPR004027">
    <property type="entry name" value="SEC_C_motif"/>
</dbReference>
<dbReference type="InterPro" id="IPR000185">
    <property type="entry name" value="SecA"/>
</dbReference>
<dbReference type="InterPro" id="IPR011115">
    <property type="entry name" value="SecA_DEAD"/>
</dbReference>
<dbReference type="InterPro" id="IPR014018">
    <property type="entry name" value="SecA_motor_DEAD"/>
</dbReference>
<dbReference type="InterPro" id="IPR011130">
    <property type="entry name" value="SecA_preprotein_X-link_dom"/>
</dbReference>
<dbReference type="InterPro" id="IPR044722">
    <property type="entry name" value="SecA_SF2_C"/>
</dbReference>
<dbReference type="InterPro" id="IPR011116">
    <property type="entry name" value="SecA_Wing/Scaffold"/>
</dbReference>
<dbReference type="InterPro" id="IPR036266">
    <property type="entry name" value="SecA_Wing/Scaffold_sf"/>
</dbReference>
<dbReference type="InterPro" id="IPR036670">
    <property type="entry name" value="SecA_X-link_sf"/>
</dbReference>
<dbReference type="NCBIfam" id="NF009538">
    <property type="entry name" value="PRK12904.1"/>
    <property type="match status" value="1"/>
</dbReference>
<dbReference type="NCBIfam" id="TIGR00963">
    <property type="entry name" value="secA"/>
    <property type="match status" value="1"/>
</dbReference>
<dbReference type="PANTHER" id="PTHR30612:SF0">
    <property type="entry name" value="CHLOROPLAST PROTEIN-TRANSPORTING ATPASE"/>
    <property type="match status" value="1"/>
</dbReference>
<dbReference type="PANTHER" id="PTHR30612">
    <property type="entry name" value="SECA INNER MEMBRANE COMPONENT OF SEC PROTEIN SECRETION SYSTEM"/>
    <property type="match status" value="1"/>
</dbReference>
<dbReference type="Pfam" id="PF21090">
    <property type="entry name" value="P-loop_SecA"/>
    <property type="match status" value="1"/>
</dbReference>
<dbReference type="Pfam" id="PF02810">
    <property type="entry name" value="SEC-C"/>
    <property type="match status" value="1"/>
</dbReference>
<dbReference type="Pfam" id="PF07517">
    <property type="entry name" value="SecA_DEAD"/>
    <property type="match status" value="1"/>
</dbReference>
<dbReference type="Pfam" id="PF01043">
    <property type="entry name" value="SecA_PP_bind"/>
    <property type="match status" value="1"/>
</dbReference>
<dbReference type="Pfam" id="PF07516">
    <property type="entry name" value="SecA_SW"/>
    <property type="match status" value="1"/>
</dbReference>
<dbReference type="PRINTS" id="PR00906">
    <property type="entry name" value="SECA"/>
</dbReference>
<dbReference type="SMART" id="SM00957">
    <property type="entry name" value="SecA_DEAD"/>
    <property type="match status" value="1"/>
</dbReference>
<dbReference type="SMART" id="SM00958">
    <property type="entry name" value="SecA_PP_bind"/>
    <property type="match status" value="1"/>
</dbReference>
<dbReference type="SUPFAM" id="SSF81886">
    <property type="entry name" value="Helical scaffold and wing domains of SecA"/>
    <property type="match status" value="1"/>
</dbReference>
<dbReference type="SUPFAM" id="SSF52540">
    <property type="entry name" value="P-loop containing nucleoside triphosphate hydrolases"/>
    <property type="match status" value="2"/>
</dbReference>
<dbReference type="SUPFAM" id="SSF81767">
    <property type="entry name" value="Pre-protein crosslinking domain of SecA"/>
    <property type="match status" value="1"/>
</dbReference>
<dbReference type="PROSITE" id="PS51196">
    <property type="entry name" value="SECA_MOTOR_DEAD"/>
    <property type="match status" value="1"/>
</dbReference>
<feature type="chain" id="PRO_0000320901" description="Protein translocase subunit SecA">
    <location>
        <begin position="1"/>
        <end position="911"/>
    </location>
</feature>
<feature type="region of interest" description="Disordered" evidence="2">
    <location>
        <begin position="861"/>
        <end position="880"/>
    </location>
</feature>
<feature type="binding site" evidence="1">
    <location>
        <position position="87"/>
    </location>
    <ligand>
        <name>ATP</name>
        <dbReference type="ChEBI" id="CHEBI:30616"/>
    </ligand>
</feature>
<feature type="binding site" evidence="1">
    <location>
        <begin position="105"/>
        <end position="109"/>
    </location>
    <ligand>
        <name>ATP</name>
        <dbReference type="ChEBI" id="CHEBI:30616"/>
    </ligand>
</feature>
<feature type="binding site" evidence="1">
    <location>
        <position position="512"/>
    </location>
    <ligand>
        <name>ATP</name>
        <dbReference type="ChEBI" id="CHEBI:30616"/>
    </ligand>
</feature>
<feature type="binding site" evidence="1">
    <location>
        <position position="895"/>
    </location>
    <ligand>
        <name>Zn(2+)</name>
        <dbReference type="ChEBI" id="CHEBI:29105"/>
    </ligand>
</feature>
<feature type="binding site" evidence="1">
    <location>
        <position position="897"/>
    </location>
    <ligand>
        <name>Zn(2+)</name>
        <dbReference type="ChEBI" id="CHEBI:29105"/>
    </ligand>
</feature>
<feature type="binding site" evidence="1">
    <location>
        <position position="906"/>
    </location>
    <ligand>
        <name>Zn(2+)</name>
        <dbReference type="ChEBI" id="CHEBI:29105"/>
    </ligand>
</feature>
<feature type="binding site" evidence="1">
    <location>
        <position position="907"/>
    </location>
    <ligand>
        <name>Zn(2+)</name>
        <dbReference type="ChEBI" id="CHEBI:29105"/>
    </ligand>
</feature>
<name>SECA_PSEPK</name>